<keyword id="KW-0496">Mitochondrion</keyword>
<comment type="subcellular location">
    <subcellularLocation>
        <location evidence="1">Mitochondrion</location>
    </subcellularLocation>
</comment>
<sequence length="125" mass="15006">MLLLKNCLTIFFKNKNYVSWRFLEVNDRETWAEDYALDLDKYALEAYWLEAKEVKQDDASVLSCFVFKYQGWFFFFIYYYLFKTQAELDAEAKIDEELSDDEGNIDEDLEDFQNEAKVSTSLELF</sequence>
<feature type="chain" id="PRO_0000196869" description="Uncharacterized mitochondrial protein ORF7">
    <location>
        <begin position="1"/>
        <end position="125"/>
    </location>
</feature>
<reference key="1">
    <citation type="journal article" date="1990" name="Nucleic Acids Res.">
        <title>Nucleotide sequence of the mitochondrial genome of Paramecium.</title>
        <authorList>
            <person name="Pritchard A.E."/>
            <person name="Seilhamer J.J."/>
            <person name="Mahalingam R."/>
            <person name="Sable C.L."/>
            <person name="Venuti S.E."/>
            <person name="Cummings D.J."/>
        </authorList>
    </citation>
    <scope>NUCLEOTIDE SEQUENCE [GENOMIC DNA]</scope>
    <source>
        <strain>Stock 51</strain>
    </source>
</reference>
<proteinExistence type="predicted"/>
<organism>
    <name type="scientific">Paramecium tetraurelia</name>
    <dbReference type="NCBI Taxonomy" id="5888"/>
    <lineage>
        <taxon>Eukaryota</taxon>
        <taxon>Sar</taxon>
        <taxon>Alveolata</taxon>
        <taxon>Ciliophora</taxon>
        <taxon>Intramacronucleata</taxon>
        <taxon>Oligohymenophorea</taxon>
        <taxon>Peniculida</taxon>
        <taxon>Parameciidae</taxon>
        <taxon>Paramecium</taxon>
    </lineage>
</organism>
<accession>P15608</accession>
<evidence type="ECO:0000305" key="1"/>
<dbReference type="EMBL" id="X15917">
    <property type="protein sequence ID" value="CAA34048.1"/>
    <property type="molecule type" value="Genomic_DNA"/>
</dbReference>
<dbReference type="PIR" id="S07739">
    <property type="entry name" value="S07739"/>
</dbReference>
<dbReference type="GO" id="GO:0005739">
    <property type="term" value="C:mitochondrion"/>
    <property type="evidence" value="ECO:0007669"/>
    <property type="project" value="UniProtKB-SubCell"/>
</dbReference>
<protein>
    <recommendedName>
        <fullName>Uncharacterized mitochondrial protein ORF7</fullName>
    </recommendedName>
</protein>
<geneLocation type="mitochondrion"/>
<name>YM07_PARTE</name>